<name>ACCA_VIBC1</name>
<protein>
    <recommendedName>
        <fullName evidence="1">Acetyl-coenzyme A carboxylase carboxyl transferase subunit alpha</fullName>
        <shortName evidence="1">ACCase subunit alpha</shortName>
        <shortName evidence="1">Acetyl-CoA carboxylase carboxyltransferase subunit alpha</shortName>
        <ecNumber evidence="1">2.1.3.15</ecNumber>
    </recommendedName>
</protein>
<dbReference type="EC" id="2.1.3.15" evidence="1"/>
<dbReference type="EMBL" id="CP000789">
    <property type="protein sequence ID" value="ABU72170.1"/>
    <property type="molecule type" value="Genomic_DNA"/>
</dbReference>
<dbReference type="RefSeq" id="WP_010650042.1">
    <property type="nucleotide sequence ID" value="NC_022269.1"/>
</dbReference>
<dbReference type="SMR" id="A7MXZ9"/>
<dbReference type="KEGG" id="vha:VIBHAR_03221"/>
<dbReference type="PATRIC" id="fig|338187.25.peg.2969"/>
<dbReference type="UniPathway" id="UPA00655">
    <property type="reaction ID" value="UER00711"/>
</dbReference>
<dbReference type="Proteomes" id="UP000008152">
    <property type="component" value="Chromosome I"/>
</dbReference>
<dbReference type="GO" id="GO:0009317">
    <property type="term" value="C:acetyl-CoA carboxylase complex"/>
    <property type="evidence" value="ECO:0007669"/>
    <property type="project" value="InterPro"/>
</dbReference>
<dbReference type="GO" id="GO:0003989">
    <property type="term" value="F:acetyl-CoA carboxylase activity"/>
    <property type="evidence" value="ECO:0007669"/>
    <property type="project" value="InterPro"/>
</dbReference>
<dbReference type="GO" id="GO:0005524">
    <property type="term" value="F:ATP binding"/>
    <property type="evidence" value="ECO:0007669"/>
    <property type="project" value="UniProtKB-KW"/>
</dbReference>
<dbReference type="GO" id="GO:0016743">
    <property type="term" value="F:carboxyl- or carbamoyltransferase activity"/>
    <property type="evidence" value="ECO:0007669"/>
    <property type="project" value="UniProtKB-UniRule"/>
</dbReference>
<dbReference type="GO" id="GO:0006633">
    <property type="term" value="P:fatty acid biosynthetic process"/>
    <property type="evidence" value="ECO:0007669"/>
    <property type="project" value="UniProtKB-KW"/>
</dbReference>
<dbReference type="GO" id="GO:2001295">
    <property type="term" value="P:malonyl-CoA biosynthetic process"/>
    <property type="evidence" value="ECO:0007669"/>
    <property type="project" value="UniProtKB-UniRule"/>
</dbReference>
<dbReference type="FunFam" id="3.90.226.10:FF:000008">
    <property type="entry name" value="Acetyl-coenzyme A carboxylase carboxyl transferase subunit alpha"/>
    <property type="match status" value="1"/>
</dbReference>
<dbReference type="Gene3D" id="3.90.226.10">
    <property type="entry name" value="2-enoyl-CoA Hydratase, Chain A, domain 1"/>
    <property type="match status" value="1"/>
</dbReference>
<dbReference type="HAMAP" id="MF_00823">
    <property type="entry name" value="AcetylCoA_CT_alpha"/>
    <property type="match status" value="1"/>
</dbReference>
<dbReference type="InterPro" id="IPR001095">
    <property type="entry name" value="Acetyl_CoA_COase_a_su"/>
</dbReference>
<dbReference type="InterPro" id="IPR029045">
    <property type="entry name" value="ClpP/crotonase-like_dom_sf"/>
</dbReference>
<dbReference type="InterPro" id="IPR011763">
    <property type="entry name" value="COA_CT_C"/>
</dbReference>
<dbReference type="NCBIfam" id="TIGR00513">
    <property type="entry name" value="accA"/>
    <property type="match status" value="1"/>
</dbReference>
<dbReference type="NCBIfam" id="NF041504">
    <property type="entry name" value="AccA_sub"/>
    <property type="match status" value="1"/>
</dbReference>
<dbReference type="NCBIfam" id="NF004344">
    <property type="entry name" value="PRK05724.1"/>
    <property type="match status" value="1"/>
</dbReference>
<dbReference type="PANTHER" id="PTHR42853">
    <property type="entry name" value="ACETYL-COENZYME A CARBOXYLASE CARBOXYL TRANSFERASE SUBUNIT ALPHA"/>
    <property type="match status" value="1"/>
</dbReference>
<dbReference type="PANTHER" id="PTHR42853:SF3">
    <property type="entry name" value="ACETYL-COENZYME A CARBOXYLASE CARBOXYL TRANSFERASE SUBUNIT ALPHA, CHLOROPLASTIC"/>
    <property type="match status" value="1"/>
</dbReference>
<dbReference type="Pfam" id="PF03255">
    <property type="entry name" value="ACCA"/>
    <property type="match status" value="1"/>
</dbReference>
<dbReference type="PRINTS" id="PR01069">
    <property type="entry name" value="ACCCTRFRASEA"/>
</dbReference>
<dbReference type="SUPFAM" id="SSF52096">
    <property type="entry name" value="ClpP/crotonase"/>
    <property type="match status" value="1"/>
</dbReference>
<dbReference type="PROSITE" id="PS50989">
    <property type="entry name" value="COA_CT_CTER"/>
    <property type="match status" value="1"/>
</dbReference>
<sequence>MSLNFLEFEKPIAELEAKIEALRDVSRHGGDSAVDLDKEIEQLEKKSLELKKKTFSNLGAWETAQLARHPLRPYTLDYIKHAFDEFDELAGDRAFADDKAIVGGIARLEGRPVMIIGHQKGRETKEKVKRNFGMPKPEGYRKALRLMEMAERFNMPIITFIDTAGAYPGVGAEERGQSEAIATNLKVMSGLKVPVICNVVGEGGSGGALAIGVGDYVNMLQYSTYSVISPEGCASILWRDSDKAPQAADAMGLTAPRLKELELIDEIIEEPLGGAHRDHAQMAANMKANLLRQLEDLEQLDHETLLERRYQRLMNYGYC</sequence>
<keyword id="KW-0067">ATP-binding</keyword>
<keyword id="KW-0963">Cytoplasm</keyword>
<keyword id="KW-0275">Fatty acid biosynthesis</keyword>
<keyword id="KW-0276">Fatty acid metabolism</keyword>
<keyword id="KW-0444">Lipid biosynthesis</keyword>
<keyword id="KW-0443">Lipid metabolism</keyword>
<keyword id="KW-0547">Nucleotide-binding</keyword>
<keyword id="KW-0808">Transferase</keyword>
<gene>
    <name evidence="1" type="primary">accA</name>
    <name type="ordered locus">VIBHAR_03221</name>
</gene>
<organism>
    <name type="scientific">Vibrio campbellii (strain ATCC BAA-1116)</name>
    <dbReference type="NCBI Taxonomy" id="2902295"/>
    <lineage>
        <taxon>Bacteria</taxon>
        <taxon>Pseudomonadati</taxon>
        <taxon>Pseudomonadota</taxon>
        <taxon>Gammaproteobacteria</taxon>
        <taxon>Vibrionales</taxon>
        <taxon>Vibrionaceae</taxon>
        <taxon>Vibrio</taxon>
    </lineage>
</organism>
<feature type="chain" id="PRO_1000062697" description="Acetyl-coenzyme A carboxylase carboxyl transferase subunit alpha">
    <location>
        <begin position="1"/>
        <end position="319"/>
    </location>
</feature>
<feature type="domain" description="CoA carboxyltransferase C-terminal" evidence="2">
    <location>
        <begin position="35"/>
        <end position="296"/>
    </location>
</feature>
<proteinExistence type="inferred from homology"/>
<reference key="1">
    <citation type="submission" date="2007-08" db="EMBL/GenBank/DDBJ databases">
        <authorList>
            <consortium name="The Vibrio harveyi Genome Sequencing Project"/>
            <person name="Bassler B."/>
            <person name="Clifton S.W."/>
            <person name="Fulton L."/>
            <person name="Delehaunty K."/>
            <person name="Fronick C."/>
            <person name="Harrison M."/>
            <person name="Markivic C."/>
            <person name="Fulton R."/>
            <person name="Tin-Wollam A.-M."/>
            <person name="Shah N."/>
            <person name="Pepin K."/>
            <person name="Nash W."/>
            <person name="Thiruvilangam P."/>
            <person name="Bhonagiri V."/>
            <person name="Waters C."/>
            <person name="Tu K.C."/>
            <person name="Irgon J."/>
            <person name="Wilson R.K."/>
        </authorList>
    </citation>
    <scope>NUCLEOTIDE SEQUENCE [LARGE SCALE GENOMIC DNA]</scope>
    <source>
        <strain>ATCC BAA-1116 / BB120</strain>
    </source>
</reference>
<accession>A7MXZ9</accession>
<evidence type="ECO:0000255" key="1">
    <source>
        <dbReference type="HAMAP-Rule" id="MF_00823"/>
    </source>
</evidence>
<evidence type="ECO:0000255" key="2">
    <source>
        <dbReference type="PROSITE-ProRule" id="PRU01137"/>
    </source>
</evidence>
<comment type="function">
    <text evidence="1">Component of the acetyl coenzyme A carboxylase (ACC) complex. First, biotin carboxylase catalyzes the carboxylation of biotin on its carrier protein (BCCP) and then the CO(2) group is transferred by the carboxyltransferase to acetyl-CoA to form malonyl-CoA.</text>
</comment>
<comment type="catalytic activity">
    <reaction evidence="1">
        <text>N(6)-carboxybiotinyl-L-lysyl-[protein] + acetyl-CoA = N(6)-biotinyl-L-lysyl-[protein] + malonyl-CoA</text>
        <dbReference type="Rhea" id="RHEA:54728"/>
        <dbReference type="Rhea" id="RHEA-COMP:10505"/>
        <dbReference type="Rhea" id="RHEA-COMP:10506"/>
        <dbReference type="ChEBI" id="CHEBI:57288"/>
        <dbReference type="ChEBI" id="CHEBI:57384"/>
        <dbReference type="ChEBI" id="CHEBI:83144"/>
        <dbReference type="ChEBI" id="CHEBI:83145"/>
        <dbReference type="EC" id="2.1.3.15"/>
    </reaction>
</comment>
<comment type="pathway">
    <text evidence="1">Lipid metabolism; malonyl-CoA biosynthesis; malonyl-CoA from acetyl-CoA: step 1/1.</text>
</comment>
<comment type="subunit">
    <text evidence="1">Acetyl-CoA carboxylase is a heterohexamer composed of biotin carboxyl carrier protein (AccB), biotin carboxylase (AccC) and two subunits each of ACCase subunit alpha (AccA) and ACCase subunit beta (AccD).</text>
</comment>
<comment type="subcellular location">
    <subcellularLocation>
        <location evidence="1">Cytoplasm</location>
    </subcellularLocation>
</comment>
<comment type="similarity">
    <text evidence="1">Belongs to the AccA family.</text>
</comment>